<organism>
    <name type="scientific">Mycoplasma pneumoniae (strain ATCC 29342 / M129 / Subtype 1)</name>
    <name type="common">Mycoplasmoides pneumoniae</name>
    <dbReference type="NCBI Taxonomy" id="272634"/>
    <lineage>
        <taxon>Bacteria</taxon>
        <taxon>Bacillati</taxon>
        <taxon>Mycoplasmatota</taxon>
        <taxon>Mycoplasmoidales</taxon>
        <taxon>Mycoplasmoidaceae</taxon>
        <taxon>Mycoplasmoides</taxon>
    </lineage>
</organism>
<reference key="1">
    <citation type="journal article" date="1996" name="Nucleic Acids Res.">
        <title>Complete sequence analysis of the genome of the bacterium Mycoplasma pneumoniae.</title>
        <authorList>
            <person name="Himmelreich R."/>
            <person name="Hilbert H."/>
            <person name="Plagens H."/>
            <person name="Pirkl E."/>
            <person name="Li B.-C."/>
            <person name="Herrmann R."/>
        </authorList>
    </citation>
    <scope>NUCLEOTIDE SEQUENCE [LARGE SCALE GENOMIC DNA]</scope>
    <source>
        <strain>ATCC 29342 / M129 / Subtype 1</strain>
    </source>
</reference>
<feature type="chain" id="PRO_0000210599" description="Uncharacterized protein MG414 homolog">
    <location>
        <begin position="1"/>
        <end position="997"/>
    </location>
</feature>
<protein>
    <recommendedName>
        <fullName>Uncharacterized protein MG414 homolog</fullName>
    </recommendedName>
</protein>
<proteinExistence type="inferred from homology"/>
<comment type="similarity">
    <text evidence="1">Belongs to the MG414/MG415 family.</text>
</comment>
<name>Y612_MYCPN</name>
<evidence type="ECO:0000305" key="1"/>
<gene>
    <name type="ordered locus">MPN_612</name>
    <name type="ORF">C12_orf997</name>
    <name type="ORF">MP230</name>
</gene>
<sequence length="997" mass="117141">MRSYHYLPLLGFVAFPTLLANASLDKNLVDSSLYISNSAHHNQGFTVGIKLKDSYFRKDFNFENPLIYKPNNKTTFGWNYSTLWTQLADGYYDRYNQLLRENNFNWYNNIYYIKDVNLGIESSYTSSLAWNKTFSYPGVRNSFKSDIHDLQYFHFHNDSKSGFGPSRINDPWYPQHDKYVTLSAGRTAEEAKNAGWSIPYNLETQRLFSPVWNRNKDFKWINVFFGFMNRSLSVKSPNINDIVQNAKWIKQGKNGNYFIIFNAYAITQNDGFFEDRPNNIFIATLWNNWWLESTPIYIYRVFWEVELIKTPRVFEQDNVQWNEPVLPKETWVFSIDNKQANAYWSSSNGFKDKVIKDRKIMEAFTRNRQVTQSILNMGKNVVVKPLTDDEEQSLFSNKWDIFKYTPIIPVNAQRFGVDFYVEQHNADLKPPISFSQLSRLWLSQLQFDPNSVVDTLSKTFNEKDLSQKDQLQIMFKKEFTQAIAQISKLNEEIDLATDKATALQKFDSLKSKDSNVNFASLQYLYDLLGMEPTNKEHLIFIRNLPEMLQTIFARAKLLAKVKIGDTLQEITLLKNNVNVFDIKTWEKYLTPQQHASNEYTINFLSLDFIVDGYESENLHFQVVDQLFGAVKNLPTINKIPEGYQYKFKYRSNFSNQQFKEKDFSVPLHKAIKSFSVGELKQRMEKLNDFEKQQIVFVIKNSFAGVDKTVLDVDANSLTFVEDPRQYKLDLGNMNENKGFFYVLADIHNSNELFKLGSTIDPEIIKGQIYFVKQNQIKPNTRTYLFKINTRKLLLDKQKLWFKPHLETQTVSFMFDEFEIGKLDIETSNIQLIDDYEFEFQSDFSLQDEQVLLEKLNIVLSQMNLHVETKNARLNPVNKMAYLTVLKNNQKFNLEFHVDRYTSQLSIQAMLGSQRLFAINYDLKLSQNKQMLYLINKDGLEKSVWFNIKNDSQTKLAQQLARFLKENNFQFRQKPVFDFHTQNKAFALEKLDNKDDTD</sequence>
<keyword id="KW-1185">Reference proteome</keyword>
<accession>P75183</accession>
<dbReference type="EMBL" id="U00089">
    <property type="protein sequence ID" value="AAB95878.1"/>
    <property type="molecule type" value="Genomic_DNA"/>
</dbReference>
<dbReference type="PIR" id="S73556">
    <property type="entry name" value="S73556"/>
</dbReference>
<dbReference type="RefSeq" id="NP_110301.1">
    <property type="nucleotide sequence ID" value="NC_000912.1"/>
</dbReference>
<dbReference type="RefSeq" id="WP_010874969.1">
    <property type="nucleotide sequence ID" value="NC_000912.1"/>
</dbReference>
<dbReference type="IntAct" id="P75183">
    <property type="interactions" value="1"/>
</dbReference>
<dbReference type="STRING" id="272634.MPN_612"/>
<dbReference type="EnsemblBacteria" id="AAB95878">
    <property type="protein sequence ID" value="AAB95878"/>
    <property type="gene ID" value="MPN_612"/>
</dbReference>
<dbReference type="KEGG" id="mpn:MPN_612"/>
<dbReference type="PATRIC" id="fig|272634.6.peg.676"/>
<dbReference type="HOGENOM" id="CLU_293346_0_0_14"/>
<dbReference type="OrthoDB" id="9969407at2"/>
<dbReference type="BioCyc" id="MPNE272634:G1GJ3-987-MONOMER"/>
<dbReference type="Proteomes" id="UP000000808">
    <property type="component" value="Chromosome"/>
</dbReference>